<dbReference type="EMBL" id="Y08900">
    <property type="protein sequence ID" value="CAA70108.1"/>
    <property type="molecule type" value="mRNA"/>
</dbReference>
<dbReference type="EMBL" id="Y08901">
    <property type="protein sequence ID" value="CAA70109.1"/>
    <property type="molecule type" value="mRNA"/>
</dbReference>
<dbReference type="EMBL" id="U50395">
    <property type="protein sequence ID" value="AAC53040.1"/>
    <property type="molecule type" value="mRNA"/>
</dbReference>
<dbReference type="EMBL" id="D86070">
    <property type="protein sequence ID" value="BAA13004.1"/>
    <property type="molecule type" value="mRNA"/>
</dbReference>
<dbReference type="PIR" id="JC6176">
    <property type="entry name" value="JC6176"/>
</dbReference>
<dbReference type="RefSeq" id="NP_001230905.1">
    <property type="nucleotide sequence ID" value="NM_001243976.1"/>
</dbReference>
<dbReference type="SMR" id="O09185"/>
<dbReference type="PaxDb" id="10029-NP_001230905.1"/>
<dbReference type="GeneID" id="100682525"/>
<dbReference type="KEGG" id="cge:100682525"/>
<dbReference type="CTD" id="7157"/>
<dbReference type="eggNOG" id="ENOG502QVY3">
    <property type="taxonomic scope" value="Eukaryota"/>
</dbReference>
<dbReference type="OrthoDB" id="5915660at2759"/>
<dbReference type="Proteomes" id="UP000694386">
    <property type="component" value="Unplaced"/>
</dbReference>
<dbReference type="Proteomes" id="UP001108280">
    <property type="component" value="Chromosome 7"/>
</dbReference>
<dbReference type="GO" id="GO:0005813">
    <property type="term" value="C:centrosome"/>
    <property type="evidence" value="ECO:0000250"/>
    <property type="project" value="UniProtKB"/>
</dbReference>
<dbReference type="GO" id="GO:0005737">
    <property type="term" value="C:cytoplasm"/>
    <property type="evidence" value="ECO:0000250"/>
    <property type="project" value="UniProtKB"/>
</dbReference>
<dbReference type="GO" id="GO:0005783">
    <property type="term" value="C:endoplasmic reticulum"/>
    <property type="evidence" value="ECO:0007669"/>
    <property type="project" value="UniProtKB-SubCell"/>
</dbReference>
<dbReference type="GO" id="GO:0005759">
    <property type="term" value="C:mitochondrial matrix"/>
    <property type="evidence" value="ECO:0007669"/>
    <property type="project" value="UniProtKB-SubCell"/>
</dbReference>
<dbReference type="GO" id="GO:0005739">
    <property type="term" value="C:mitochondrion"/>
    <property type="evidence" value="ECO:0000250"/>
    <property type="project" value="UniProtKB"/>
</dbReference>
<dbReference type="GO" id="GO:0005730">
    <property type="term" value="C:nucleolus"/>
    <property type="evidence" value="ECO:0000250"/>
    <property type="project" value="UniProtKB"/>
</dbReference>
<dbReference type="GO" id="GO:0005634">
    <property type="term" value="C:nucleus"/>
    <property type="evidence" value="ECO:0000250"/>
    <property type="project" value="UniProtKB"/>
</dbReference>
<dbReference type="GO" id="GO:0016605">
    <property type="term" value="C:PML body"/>
    <property type="evidence" value="ECO:0007669"/>
    <property type="project" value="UniProtKB-SubCell"/>
</dbReference>
<dbReference type="GO" id="GO:0036310">
    <property type="term" value="F:ATP-dependent DNA/DNA annealing activity"/>
    <property type="evidence" value="ECO:0000250"/>
    <property type="project" value="UniProtKB"/>
</dbReference>
<dbReference type="GO" id="GO:0005507">
    <property type="term" value="F:copper ion binding"/>
    <property type="evidence" value="ECO:0000250"/>
    <property type="project" value="UniProtKB"/>
</dbReference>
<dbReference type="GO" id="GO:0003677">
    <property type="term" value="F:DNA binding"/>
    <property type="evidence" value="ECO:0000250"/>
    <property type="project" value="UniProtKB"/>
</dbReference>
<dbReference type="GO" id="GO:0000981">
    <property type="term" value="F:DNA-binding transcription factor activity, RNA polymerase II-specific"/>
    <property type="evidence" value="ECO:0000250"/>
    <property type="project" value="UniProtKB"/>
</dbReference>
<dbReference type="GO" id="GO:0140693">
    <property type="term" value="F:molecular condensate scaffold activity"/>
    <property type="evidence" value="ECO:0000250"/>
    <property type="project" value="UniProtKB"/>
</dbReference>
<dbReference type="GO" id="GO:1990841">
    <property type="term" value="F:promoter-specific chromatin binding"/>
    <property type="evidence" value="ECO:0000250"/>
    <property type="project" value="UniProtKB"/>
</dbReference>
<dbReference type="GO" id="GO:0000978">
    <property type="term" value="F:RNA polymerase II cis-regulatory region sequence-specific DNA binding"/>
    <property type="evidence" value="ECO:0000250"/>
    <property type="project" value="UniProtKB"/>
</dbReference>
<dbReference type="GO" id="GO:0090398">
    <property type="term" value="P:cellular senescence"/>
    <property type="evidence" value="ECO:0000250"/>
    <property type="project" value="UniProtKB"/>
</dbReference>
<dbReference type="GO" id="GO:0048512">
    <property type="term" value="P:circadian behavior"/>
    <property type="evidence" value="ECO:0000250"/>
    <property type="project" value="UniProtKB"/>
</dbReference>
<dbReference type="GO" id="GO:0006974">
    <property type="term" value="P:DNA damage response"/>
    <property type="evidence" value="ECO:0000250"/>
    <property type="project" value="UniProtKB"/>
</dbReference>
<dbReference type="GO" id="GO:0043153">
    <property type="term" value="P:entrainment of circadian clock by photoperiod"/>
    <property type="evidence" value="ECO:0000250"/>
    <property type="project" value="UniProtKB"/>
</dbReference>
<dbReference type="GO" id="GO:0030308">
    <property type="term" value="P:negative regulation of cell growth"/>
    <property type="evidence" value="ECO:0000250"/>
    <property type="project" value="UniProtKB"/>
</dbReference>
<dbReference type="GO" id="GO:0045892">
    <property type="term" value="P:negative regulation of DNA-templated transcription"/>
    <property type="evidence" value="ECO:0000250"/>
    <property type="project" value="UniProtKB"/>
</dbReference>
<dbReference type="GO" id="GO:0006289">
    <property type="term" value="P:nucleotide-excision repair"/>
    <property type="evidence" value="ECO:0000250"/>
    <property type="project" value="UniProtKB"/>
</dbReference>
<dbReference type="GO" id="GO:0097252">
    <property type="term" value="P:oligodendrocyte apoptotic process"/>
    <property type="evidence" value="ECO:0000250"/>
    <property type="project" value="UniProtKB"/>
</dbReference>
<dbReference type="GO" id="GO:0043065">
    <property type="term" value="P:positive regulation of apoptotic process"/>
    <property type="evidence" value="ECO:0000250"/>
    <property type="project" value="UniProtKB"/>
</dbReference>
<dbReference type="GO" id="GO:2001244">
    <property type="term" value="P:positive regulation of intrinsic apoptotic signaling pathway"/>
    <property type="evidence" value="ECO:0000250"/>
    <property type="project" value="UniProtKB"/>
</dbReference>
<dbReference type="GO" id="GO:0045944">
    <property type="term" value="P:positive regulation of transcription by RNA polymerase II"/>
    <property type="evidence" value="ECO:0000250"/>
    <property type="project" value="UniProtKB"/>
</dbReference>
<dbReference type="GO" id="GO:0051262">
    <property type="term" value="P:protein tetramerization"/>
    <property type="evidence" value="ECO:0007669"/>
    <property type="project" value="InterPro"/>
</dbReference>
<dbReference type="CDD" id="cd08367">
    <property type="entry name" value="P53"/>
    <property type="match status" value="1"/>
</dbReference>
<dbReference type="FunFam" id="2.60.40.720:FF:000003">
    <property type="entry name" value="Cellular tumor antigen p53"/>
    <property type="match status" value="1"/>
</dbReference>
<dbReference type="FunFam" id="4.10.170.10:FF:000003">
    <property type="entry name" value="Cellular tumor antigen p53"/>
    <property type="match status" value="1"/>
</dbReference>
<dbReference type="Gene3D" id="2.60.40.720">
    <property type="match status" value="1"/>
</dbReference>
<dbReference type="Gene3D" id="6.10.50.20">
    <property type="match status" value="1"/>
</dbReference>
<dbReference type="Gene3D" id="4.10.170.10">
    <property type="entry name" value="p53-like tetramerisation domain"/>
    <property type="match status" value="1"/>
</dbReference>
<dbReference type="InterPro" id="IPR008967">
    <property type="entry name" value="p53-like_TF_DNA-bd_sf"/>
</dbReference>
<dbReference type="InterPro" id="IPR012346">
    <property type="entry name" value="p53/RUNT-type_TF_DNA-bd_sf"/>
</dbReference>
<dbReference type="InterPro" id="IPR011615">
    <property type="entry name" value="p53_DNA-bd"/>
</dbReference>
<dbReference type="InterPro" id="IPR036674">
    <property type="entry name" value="p53_tetramer_sf"/>
</dbReference>
<dbReference type="InterPro" id="IPR010991">
    <property type="entry name" value="p53_tetrameristn"/>
</dbReference>
<dbReference type="InterPro" id="IPR013872">
    <property type="entry name" value="p53_transactivation_domain"/>
</dbReference>
<dbReference type="InterPro" id="IPR002117">
    <property type="entry name" value="p53_tumour_suppressor"/>
</dbReference>
<dbReference type="PANTHER" id="PTHR11447">
    <property type="entry name" value="CELLULAR TUMOR ANTIGEN P53"/>
    <property type="match status" value="1"/>
</dbReference>
<dbReference type="PANTHER" id="PTHR11447:SF6">
    <property type="entry name" value="CELLULAR TUMOR ANTIGEN P53"/>
    <property type="match status" value="1"/>
</dbReference>
<dbReference type="Pfam" id="PF00870">
    <property type="entry name" value="P53"/>
    <property type="match status" value="1"/>
</dbReference>
<dbReference type="Pfam" id="PF08563">
    <property type="entry name" value="P53_TAD"/>
    <property type="match status" value="1"/>
</dbReference>
<dbReference type="Pfam" id="PF07710">
    <property type="entry name" value="P53_tetramer"/>
    <property type="match status" value="1"/>
</dbReference>
<dbReference type="PRINTS" id="PR00386">
    <property type="entry name" value="P53SUPPRESSR"/>
</dbReference>
<dbReference type="SUPFAM" id="SSF47719">
    <property type="entry name" value="p53 tetramerization domain"/>
    <property type="match status" value="1"/>
</dbReference>
<dbReference type="SUPFAM" id="SSF49417">
    <property type="entry name" value="p53-like transcription factors"/>
    <property type="match status" value="1"/>
</dbReference>
<dbReference type="PROSITE" id="PS00348">
    <property type="entry name" value="P53"/>
    <property type="match status" value="1"/>
</dbReference>
<proteinExistence type="evidence at transcript level"/>
<sequence>MEEPQSDLSIELPLSQETFSDLWKLLPPNNVLSTLPSSDSIEELFLSENVTGWLEDSGGALQGVAAAAASTAEDPVTETPAPVASAPATPWPLSSSVPSYKTYQGDYGFRLGFLHSGTAKSVTCTYSPSLNKLFCQLAKTCPVQLWVNSTPPPGTRVRAMAIYKKLQYMTEVVRRCPHHERSSEGDSLAPPQHLIRVEGNLHAEYLDDKQTFRHSVVVPYEPPEVGSDCTTIHYNYMCNSSCMGGMNRRPILTIITLEDPSGNLLGRNSFEVRICACPGRDRRTEEKNFQKKGEPCPELPPKSAKRALPTNTSSSPPPKKKTLDGEYFTLKIRGHERFKMFQELNEALELKDAQASKGSEDNGAHSSYLKSKKGQSASRLKKLMIKREGPDSD</sequence>
<reference key="1">
    <citation type="journal article" date="1997" name="Nucleic Acids Res.">
        <title>The p53 status of Chinese hamster V79 cells frequently used for studies on DNA damage and DNA repair.</title>
        <authorList>
            <person name="Chaung W."/>
            <person name="Mi L.J."/>
            <person name="Boorstein R.J."/>
        </authorList>
    </citation>
    <scope>NUCLEOTIDE SEQUENCE [MRNA]</scope>
    <scope>VARIANTS GLN-133 AND TRP-135</scope>
</reference>
<reference key="2">
    <citation type="journal article" date="1997" name="Gene">
        <title>Cloning and characterization of Chinese hamster p53 cDNA.</title>
        <authorList>
            <person name="Lee H."/>
            <person name="Larner J.M."/>
            <person name="Hamlin J.L."/>
        </authorList>
    </citation>
    <scope>NUCLEOTIDE SEQUENCE [MRNA]</scope>
    <source>
        <tissue>Liver</tissue>
    </source>
</reference>
<reference key="3">
    <citation type="submission" date="1996-06" db="EMBL/GenBank/DDBJ databases">
        <authorList>
            <person name="Shimizu T."/>
            <person name="Nikaido O."/>
            <person name="Suzuki F."/>
        </authorList>
    </citation>
    <scope>NUCLEOTIDE SEQUENCE [MRNA]</scope>
    <source>
        <tissue>Embryonic fibroblast</tissue>
    </source>
</reference>
<feature type="chain" id="PRO_0000185698" description="Cellular tumor antigen p53">
    <location>
        <begin position="1"/>
        <end position="393"/>
    </location>
</feature>
<feature type="DNA-binding region" evidence="3">
    <location>
        <begin position="102"/>
        <end position="292"/>
    </location>
</feature>
<feature type="region of interest" description="Interaction with CCAR2" evidence="3">
    <location>
        <begin position="1"/>
        <end position="320"/>
    </location>
</feature>
<feature type="region of interest" description="Transcription activation (acidic)">
    <location>
        <begin position="1"/>
        <end position="45"/>
    </location>
</feature>
<feature type="region of interest" description="Interaction with WWOX" evidence="1">
    <location>
        <begin position="66"/>
        <end position="110"/>
    </location>
</feature>
<feature type="region of interest" description="Interaction with HIPK1" evidence="1">
    <location>
        <begin position="100"/>
        <end position="370"/>
    </location>
</feature>
<feature type="region of interest" description="Required for interaction with ZNF385A" evidence="1">
    <location>
        <begin position="100"/>
        <end position="300"/>
    </location>
</feature>
<feature type="region of interest" description="Required for interaction with FBXO42" evidence="1">
    <location>
        <begin position="113"/>
        <end position="236"/>
    </location>
</feature>
<feature type="region of interest" description="Interaction with AXIN1" evidence="1">
    <location>
        <begin position="116"/>
        <end position="292"/>
    </location>
</feature>
<feature type="region of interest" description="Interaction with E4F1" evidence="1">
    <location>
        <begin position="256"/>
        <end position="294"/>
    </location>
</feature>
<feature type="region of interest" description="Interaction with DNA" evidence="1">
    <location>
        <begin position="273"/>
        <end position="280"/>
    </location>
</feature>
<feature type="region of interest" description="Disordered" evidence="5">
    <location>
        <begin position="283"/>
        <end position="325"/>
    </location>
</feature>
<feature type="region of interest" description="Interaction with HIPK2" evidence="1">
    <location>
        <begin position="319"/>
        <end position="360"/>
    </location>
</feature>
<feature type="region of interest" description="Oligomerization">
    <location>
        <begin position="325"/>
        <end position="356"/>
    </location>
</feature>
<feature type="region of interest" description="Disordered" evidence="5">
    <location>
        <begin position="352"/>
        <end position="393"/>
    </location>
</feature>
<feature type="region of interest" description="Interaction with USP7" evidence="1">
    <location>
        <begin position="359"/>
        <end position="363"/>
    </location>
</feature>
<feature type="region of interest" description="Basic (repression of DNA-binding)">
    <location>
        <begin position="368"/>
        <end position="387"/>
    </location>
</feature>
<feature type="short sequence motif" description="Bipartite nuclear localization signal" evidence="1">
    <location>
        <begin position="305"/>
        <end position="321"/>
    </location>
</feature>
<feature type="short sequence motif" description="Nuclear export signal" evidence="1">
    <location>
        <begin position="339"/>
        <end position="350"/>
    </location>
</feature>
<feature type="short sequence motif" description="[KR]-[STA]-K motif">
    <location>
        <begin position="370"/>
        <end position="372"/>
    </location>
</feature>
<feature type="compositionally biased region" description="Basic and acidic residues" evidence="5">
    <location>
        <begin position="283"/>
        <end position="295"/>
    </location>
</feature>
<feature type="compositionally biased region" description="Basic and acidic residues" evidence="5">
    <location>
        <begin position="352"/>
        <end position="363"/>
    </location>
</feature>
<feature type="compositionally biased region" description="Polar residues" evidence="5">
    <location>
        <begin position="364"/>
        <end position="378"/>
    </location>
</feature>
<feature type="binding site" evidence="3">
    <location>
        <position position="176"/>
    </location>
    <ligand>
        <name>Zn(2+)</name>
        <dbReference type="ChEBI" id="CHEBI:29105"/>
    </ligand>
</feature>
<feature type="binding site" evidence="3">
    <location>
        <position position="179"/>
    </location>
    <ligand>
        <name>Zn(2+)</name>
        <dbReference type="ChEBI" id="CHEBI:29105"/>
    </ligand>
</feature>
<feature type="binding site" evidence="3">
    <location>
        <position position="238"/>
    </location>
    <ligand>
        <name>Zn(2+)</name>
        <dbReference type="ChEBI" id="CHEBI:29105"/>
    </ligand>
</feature>
<feature type="binding site" evidence="3">
    <location>
        <position position="242"/>
    </location>
    <ligand>
        <name>Zn(2+)</name>
        <dbReference type="ChEBI" id="CHEBI:29105"/>
    </ligand>
</feature>
<feature type="site" description="Interaction with DNA" evidence="3">
    <location>
        <position position="120"/>
    </location>
</feature>
<feature type="modified residue" description="Phosphoserine; by HIPK4" evidence="3">
    <location>
        <position position="9"/>
    </location>
</feature>
<feature type="modified residue" description="Phosphoserine; by CDK5, PRPK, AMPK, NUAK1 and ATM" evidence="3">
    <location>
        <position position="15"/>
    </location>
</feature>
<feature type="modified residue" description="Phosphothreonine; by CK1, VRK1 and VRK2" evidence="3">
    <location>
        <position position="18"/>
    </location>
</feature>
<feature type="modified residue" description="Phosphoserine; by CHEK2, CK1 and PLK3" evidence="3">
    <location>
        <position position="20"/>
    </location>
</feature>
<feature type="modified residue" description="Phosphoserine; by CDK5 and CDK7" evidence="3">
    <location>
        <position position="33"/>
    </location>
</feature>
<feature type="modified residue" description="Phosphoserine; by MAPKAPK5" evidence="3">
    <location>
        <position position="37"/>
    </location>
</feature>
<feature type="modified residue" description="Phosphoserine; by CDK5, DYRK2, HIPK2 and PKC/PRKCG" evidence="3">
    <location>
        <position position="47"/>
    </location>
</feature>
<feature type="modified residue" description="N6-acetyllysine" evidence="3">
    <location>
        <position position="120"/>
    </location>
</feature>
<feature type="modified residue" description="N6-lactoyllysine" evidence="3">
    <location>
        <position position="120"/>
    </location>
</feature>
<feature type="modified residue" description="N6-lactoyllysine" evidence="3">
    <location>
        <position position="139"/>
    </location>
</feature>
<feature type="modified residue" description="Phosphoserine; by AURKB" evidence="3">
    <location>
        <position position="183"/>
    </location>
</feature>
<feature type="modified residue" description="Phosphoserine; by AURKB" evidence="3">
    <location>
        <position position="269"/>
    </location>
</feature>
<feature type="modified residue" description="Phosphothreonine; by AURKB" evidence="3">
    <location>
        <position position="284"/>
    </location>
</feature>
<feature type="modified residue" description="N6-acetyllysine" evidence="3">
    <location>
        <position position="305"/>
    </location>
</feature>
<feature type="modified residue" description="Phosphoserine; by AURKA, CDK1 and CDK2" evidence="3">
    <location>
        <position position="315"/>
    </location>
</feature>
<feature type="modified residue" description="N6-acetyllysine" evidence="2">
    <location>
        <position position="321"/>
    </location>
</feature>
<feature type="modified residue" description="Omega-N-methylarginine" evidence="3">
    <location>
        <position position="333"/>
    </location>
</feature>
<feature type="modified residue" description="Symmetric dimethylarginine" evidence="3">
    <location>
        <position position="337"/>
    </location>
</feature>
<feature type="modified residue" description="N6,N6-dimethyllysine; alternate" evidence="3">
    <location>
        <position position="370"/>
    </location>
</feature>
<feature type="modified residue" description="N6-methyllysine; by SMYD2; alternate" evidence="3">
    <location>
        <position position="370"/>
    </location>
</feature>
<feature type="modified residue" description="N6-methyllysine; by SETD7" evidence="3">
    <location>
        <position position="372"/>
    </location>
</feature>
<feature type="modified residue" description="N6,N6-dimethyllysine; by EHMT1 and EHMT2; alternate" evidence="3">
    <location>
        <position position="373"/>
    </location>
</feature>
<feature type="modified residue" description="N6-acetyllysine; alternate" evidence="3">
    <location>
        <position position="373"/>
    </location>
</feature>
<feature type="modified residue" description="N6-acetyllysine" evidence="3">
    <location>
        <position position="381"/>
    </location>
</feature>
<feature type="modified residue" description="N6,N6-dimethyllysine; alternate" evidence="3">
    <location>
        <position position="382"/>
    </location>
</feature>
<feature type="modified residue" description="N6-acetyllysine; alternate" evidence="3">
    <location>
        <position position="382"/>
    </location>
</feature>
<feature type="modified residue" description="N6-methyllysine; by KMT5A; alternate" evidence="3">
    <location>
        <position position="382"/>
    </location>
</feature>
<feature type="modified residue" description="Phosphoserine; by CK2, CDK2 and NUAK1" evidence="3">
    <location>
        <position position="392"/>
    </location>
</feature>
<feature type="cross-link" description="Glycyl lysine isopeptide (Lys-Gly) (interchain with G-Cter in ubiquitin)" evidence="3">
    <location>
        <position position="24"/>
    </location>
</feature>
<feature type="cross-link" description="Glycyl lysine isopeptide (Lys-Gly) (interchain with G-Cter in ubiquitin)" evidence="3">
    <location>
        <position position="291"/>
    </location>
</feature>
<feature type="cross-link" description="Glycyl lysine isopeptide (Lys-Gly) (interchain with G-Cter in ubiquitin)" evidence="3">
    <location>
        <position position="292"/>
    </location>
</feature>
<feature type="cross-link" description="Glycyl lysine isopeptide (Lys-Gly) (interchain with G-Cter in ubiquitin)" evidence="3">
    <location>
        <position position="351"/>
    </location>
</feature>
<feature type="cross-link" description="Glycyl lysine isopeptide (Lys-Gly) (interchain with G-Cter in ubiquitin)" evidence="3">
    <location>
        <position position="357"/>
    </location>
</feature>
<feature type="cross-link" description="Glycyl lysine isopeptide (Lys-Gly) (interchain with G-Cter in SUMO)" evidence="1">
    <location>
        <position position="386"/>
    </location>
</feature>
<feature type="sequence variant" description="In cell line V79-4." evidence="6">
    <original>L</original>
    <variation>Q</variation>
    <location>
        <position position="133"/>
    </location>
</feature>
<feature type="sequence variant" description="In cell line V79-4." evidence="6">
    <original>C</original>
    <variation>W</variation>
    <location>
        <position position="135"/>
    </location>
</feature>
<feature type="sequence conflict" description="In Ref. 2; AAC53040." evidence="7" ref="2">
    <original>Y</original>
    <variation>F</variation>
    <location>
        <position position="103"/>
    </location>
</feature>
<keyword id="KW-0007">Acetylation</keyword>
<keyword id="KW-0010">Activator</keyword>
<keyword id="KW-0053">Apoptosis</keyword>
<keyword id="KW-0090">Biological rhythms</keyword>
<keyword id="KW-0131">Cell cycle</keyword>
<keyword id="KW-0963">Cytoplasm</keyword>
<keyword id="KW-0206">Cytoskeleton</keyword>
<keyword id="KW-0238">DNA-binding</keyword>
<keyword id="KW-0256">Endoplasmic reticulum</keyword>
<keyword id="KW-1017">Isopeptide bond</keyword>
<keyword id="KW-0479">Metal-binding</keyword>
<keyword id="KW-0488">Methylation</keyword>
<keyword id="KW-0496">Mitochondrion</keyword>
<keyword id="KW-1210">Necrosis</keyword>
<keyword id="KW-0539">Nucleus</keyword>
<keyword id="KW-0597">Phosphoprotein</keyword>
<keyword id="KW-0678">Repressor</keyword>
<keyword id="KW-0804">Transcription</keyword>
<keyword id="KW-0805">Transcription regulation</keyword>
<keyword id="KW-0043">Tumor suppressor</keyword>
<keyword id="KW-0832">Ubl conjugation</keyword>
<keyword id="KW-0862">Zinc</keyword>
<evidence type="ECO:0000250" key="1"/>
<evidence type="ECO:0000250" key="2">
    <source>
        <dbReference type="UniProtKB" id="P02340"/>
    </source>
</evidence>
<evidence type="ECO:0000250" key="3">
    <source>
        <dbReference type="UniProtKB" id="P04637"/>
    </source>
</evidence>
<evidence type="ECO:0000250" key="4">
    <source>
        <dbReference type="UniProtKB" id="P10361"/>
    </source>
</evidence>
<evidence type="ECO:0000256" key="5">
    <source>
        <dbReference type="SAM" id="MobiDB-lite"/>
    </source>
</evidence>
<evidence type="ECO:0000269" key="6">
    <source>
    </source>
</evidence>
<evidence type="ECO:0000305" key="7"/>
<name>P53_CRIGR</name>
<accession>O09185</accession>
<accession>P97258</accession>
<accession>P97788</accession>
<accession>Q64397</accession>
<comment type="function">
    <text evidence="2 3">Multifunctional transcription factor that induces cell cycle arrest, DNA repair or apoptosis upon binding to its target DNA sequence. Acts as a tumor suppressor in many tumor types; induces growth arrest or apoptosis depending on the physiological circumstances and cell type. Negatively regulates cell division by controlling expression of a set of genes required for this process. One of the activated genes is an inhibitor of cyclin-dependent kinases. Apoptosis induction seems to be mediated either by stimulation of BAX and FAS antigen expression, or by repression of Bcl-2 expression. Its pro-apoptotic activity is activated via its interaction with PPP1R13B/ASPP1 or TP53BP2/ASPP2 (By similarity). However, this activity is inhibited when the interaction with PPP1R13B/ASPP1 or TP53BP2/ASPP2 is displaced by PPP1R13L/iASPP (By similarity). In cooperation with mitochondrial PPIF is involved in activating oxidative stress-induced necrosis; the function is largely independent of transcription. Prevents CDK7 kinase activity when associated to CAK complex in response to DNA damage, thus stopping cell cycle progression. Induces the transcription of long intergenic non-coding RNA p21 (lincRNA-p21) and lincRNA-Mkln1. LincRNA-p21 participates in TP53-dependent transcriptional repression leading to apoptosis and seems to have an effect on cell-cycle regulation. Regulates the circadian clock by repressing CLOCK-BMAL1-mediated transcriptional activation of PER2.</text>
</comment>
<comment type="cofactor">
    <cofactor evidence="1">
        <name>Zn(2+)</name>
        <dbReference type="ChEBI" id="CHEBI:29105"/>
    </cofactor>
    <text evidence="1">Binds 1 zinc ion per subunit.</text>
</comment>
<comment type="subunit">
    <text evidence="2 3 4">Forms homodimers and homotetramers (By similarity). Binds DNA as a homotetramer. Interacts with AXIN1. Probably part of a complex consisting of TP53, HIPK2 and AXIN1. Interacts with histone acetyltransferases EP300 and methyltransferases HRMT1L2 and CARM1, and recruits them to promoters. Interacts (via C-terminus) with TAF1; when TAF1 is part of the TFIID complex. Interacts with ING4; this interaction may be indirect. Found in a complex with CABLES1 and TP73. Interacts with HIPK1, HIPK2, and TP53INP1. Interacts with WWOX. Interacts with USP7 and SYVN1. Interacts with HSP90AB1. Interacts with CHD8; leading to recruit histone H1 and prevent transactivation activity. Interacts with ARMC10, BANP, CDKN2AIP, NUAK1, STK11/LKB1, UHRF2 and E4F. Interacts with YWHAZ; the interaction enhances TP53 transcriptional activity. Phosphorylation of YWHAZ on 'Ser-58' inhibits this interaction. Interacts (via DNA-binding domain) with MAML1 (via N-terminus). Interacts with MKRN1. Interacts with PML (via C-terminus). Interacts with MDM2; leading to ubiquitination and proteasomal degradation of TP53. Directly interacts with FBXO42; leading to ubiquitination and degradation of TP53. Interacts (phosphorylated at Ser-15 by ATM) with the phosphatase PP2A-PPP2R5C holoenzyme; regulates stress-induced TP53-dependent inhibition of cell proliferation. Interacts with PPP2R2A. Interacts with AURKA, DAXX, BRD7 and TRIM24. Interacts (when monomethylated at Lys-382) with L3MBTL1. Interacts with GRK5. Binds to the CAK complex (CDK7, cyclin H and MAT1) in response to DNA damage. Interacts with CDK5 in neurons. Interacts with AURKB, SETD2, UHRF2 and NOC2L. Interacts (via N-terminus) with PTK2/FAK1; this promotes ubiquitination by MDM2. Interacts with PTK2B/PYK2; this promotes ubiquitination by MDM2. Interacts with PRKCG. Interacts with PPIF; the association implicates preferentially tetrameric TP53, is induced by oxidative stress and is impaired by cyclosporin A (CsA). Interacts with SNAI1; the interaction induces SNAI1 degradation via MDM2-mediated ubiquitination and inhibits SNAI1-induced cell invasion. Interacts with UBC9. Interacts with ZNF385B; the interaction is direct. Interacts (via DNA-binding domain) with ZNF385A; the interaction is direct and enhances p53/TP53 transactivation functions on cell-cycle arrest target genes, resulting in growth arrest (By similarity). Interacts with ANKRD2. Interacts with RFFL and RNF34; involved in p53/TP53 ubiquitination. Interacts with MTA1 and COP1. Interacts with CCAR2 (via N-terminus). Interacts with MORC3. Interacts (via C-terminus) with POU4F2 (via C-terminus). Interacts (via oligomerization region) with NOP53; the interaction is direct and may prevent the MDM2-mediated proteasomal degradation of TP53. Interacts with AFG1L; mediates mitochondrial translocation of TP53. Interacts with UBD (By similarity). Interacts with TAF6 (By similarity). Interacts with C10orf90/FATS; the interaction inhibits binding of TP53 and MDM2 (By similarity). Interacts with NUPR1; interaction is stress-dependent. Forms a complex with EP300 and NUPR1; this complex binds CDKN1A promoter leading to transcriptional induction of CDKN1A (By similarity). Interacts with PRMT5 in response to DNA damage; the interaction is TTC5/STRAP dependent (By similarity). Interacts with PPP1R13L (via SH3 domain and ANK repeats); the interaction inhibits pro-apoptotic activity of p53/TP53 (By similarity). Interacts with PPP1R13B/ASPP1 and TP53BP2/ASPP2; the interactions promotes pro-apoptotic activity (By similarity). When phosphorylated at Ser-15, interacts with DDX3X and gamma-tubulin (By similarity). Interacts with KAT7/HBO1; leading to inhibit histone acetyltransferase activity of KAT7/HBO1 (By similarity). Interacts (via N-terminus) with E3 ubiquitin-protein ligase MUL1; the interaction results in ubiquitination of cytoplasmic TP53 at Lys-24 and subsequent proteasomal degradation (By similarity). Interacts with S100A4; this interaction promotes TP53 degradation (By similarity). Interacts with TTC5/STRAP; the interaction may result in increased mitochondrial-dependent apoptosis (By similarity). Interacts with NQO1; this interaction is NADH-dependent, stabilizes TP53 in response to oxidative stress and protects it from ubiquitin-independent degradation by the 20S proteasome (By similarity). Interacts with DAZAP2 at TP53 target gene promoters; the interaction is triggered by DNA damage and leads to modulation of the expression of a subset of TP53 target genes, reducing DNA damage-induced cell death by limiting the expression of cell death-mediating TP53 target genes (By similarity). Interacts (via N-terminus) with ZNF768 (via zinc-finger domains); interaction might be facilitated by TP53 oligomerization state (By similarity). Forms a ternary complex with ALDOB and G6PD; this interaction is direct. ALDOB stabilizes the complex inhibiting G6PD activity and keeping oxidative pentose phosphate metabolism in check. Interacts with MORN3; the interactions mediate post-transcriptional modifications of TP53 by MDM2 and SIRT1 (By similarity). Interacts with HSPA9/MOT-2; the interaction promotes the degradation of TP53 (By similarity). Interacts with FBXO22; this interaction promotes TP53 proteasomal degradation (By similarity).</text>
</comment>
<comment type="subcellular location">
    <subcellularLocation>
        <location evidence="3">Cytoplasm</location>
    </subcellularLocation>
    <subcellularLocation>
        <location evidence="3">Nucleus</location>
    </subcellularLocation>
    <subcellularLocation>
        <location evidence="3">Nucleus</location>
        <location evidence="3">PML body</location>
    </subcellularLocation>
    <subcellularLocation>
        <location evidence="3">Endoplasmic reticulum</location>
    </subcellularLocation>
    <subcellularLocation>
        <location evidence="3">Mitochondrion matrix</location>
    </subcellularLocation>
    <subcellularLocation>
        <location evidence="3">Cytoplasm</location>
        <location evidence="3">Cytoskeleton</location>
        <location evidence="3">Microtubule organizing center</location>
        <location evidence="3">Centrosome</location>
    </subcellularLocation>
    <text evidence="3">Interaction with BANP promotes nuclear localization. Recruited into PML bodies together with CHEK2. Translocates to mitochondria upon oxidative stress. Translocates to mitochondria in response to mitomycin C treatment (By similarity). Competitive inhibition of TP53 interaction with HSPA9/MOT-2 by UBXN2A results in increased protein abundance and subsequent translocation of TP53 to the nucleus (By similarity).</text>
</comment>
<comment type="domain">
    <text evidence="3">The N-terminal and C-terminal disordered regions undergo liquid-liquid phase separation (LLPS) following homotetramerization and activation. Post-translational modifications, such as phosphorylation or lactylation affect the ability to undergo LLPS.</text>
</comment>
<comment type="domain">
    <text evidence="3">The nuclear export signal acts as a transcriptional repression domain. The TADI and TADII motifs (residues 17 to 25 and 48 to 56) correspond both to 9aaTAD motifs which are transactivation domains present in a large number of yeast and animal transcription factors.</text>
</comment>
<comment type="PTM">
    <text evidence="1 3">Phosphorylation on Ser residues mediates transcriptional activation. Phosphorylation at Ser-9 by HIPK4 increases repression activity on BIRC5 promoter (By similarity). Phosphorylated on Thr-18 by VRK1, which may prevent the interaction with MDM2. Phosphorylated on Ser-20 by CHEK2 in response to DNA damage, which prevents ubiquitination by MDM2. Phosphorylated on Ser-20 by PLK3 in response to reactive oxygen species (ROS), promoting p53/TP53-mediated apoptosis. Phosphorylated on Ser-33 by CDK7 in a CAK complex in response to DNA damage. Phosphorylated by HIPK1. Phosphorylated on Ser-392 following UV but not gamma irradiation. Stabilized by CDK5-mediated phosphorylation in response to genotoxic and oxidative stresses at Ser-15, Ser-33 and Ser-47, leading to accumulation of p53/TP53, particularly in the nucleus, thus inducing the transactivation of p53/TP53 target genes. Phosphorylated by DYRK2 at Ser-47 in response to genotoxic stress. Phosphorylated at Ser-315 and Ser-392 by CDK2 in response to DNA-damage (By similarity). Phosphorylation at Ser-15 is required for interaction with DDX3X and gamma-tubulin (By similarity). Phosphorylation at Ser-392 regulates its ability to undergo liquid-liquid phase separation by increasing fluidity of TP53/p53 condensates (By similarity).</text>
</comment>
<comment type="PTM">
    <text evidence="3">Monomethylated at Lys-372 by SETD7, leading to stabilization and increased transcriptional activation. Monomethylated at Lys-370 by SMYD2, leading to decreased DNA-binding activity and subsequent transcriptional regulation activity. Lys-372 monomethylation prevents interaction with SMYD2 and subsequent monomethylation at Lys-370. Dimethylated at Lys-373 by EHMT1 and EHMT2. Monomethylated at Lys-382 by KMT5A, promoting interaction with L3MBTL1 and leading to repress transcriptional activity. Demethylation of dimethylated Lys-370 by KDM1A prevents interaction with TP53BP1 and represses TP53-mediated transcriptional activation (By similarity). Monomethylated at Arg-333 and dimethylated at Arg-337 by PRMT5; methylation is increased after DNA damage and might possibly affect TP53 target gene specificity (By similarity).</text>
</comment>
<comment type="PTM">
    <text evidence="1">Sumoylated with SUMO1. Sumoylated at Lys-386 by UBC9 (By similarity).</text>
</comment>
<comment type="PTM">
    <text evidence="2 3">Ubiquitinated by MDM2 and SYVN1, which leads to proteasomal degradation. Ubiquitinated by RFWD3, which works in cooperation with MDM2 and may catalyze the formation of short polyubiquitin chains on p53/TP53 that are not targeted to the proteasome. Ubiquitinated by MKRN1, which leads to proteasomal degradation. Deubiquitinated by USP10, leading to stabilize it. Ubiquitinated by TRIM24, RFFL, RNF34 and RNF125, which leads to proteasomal degradation. Ubiquitination by TOPORS induces degradation. Deubiquitination by USP7, leading to stabilize it. Ubiquitinated by COP1, which leads to proteasomal degradation (By similarity). Ubiquitination and subsequent proteasomal degradation is negatively regulated by CCAR2 (By similarity). Polyubiquitinated by C10orf90/FATS, polyubiquitination is 'Lys-48'-linkage independent and non-proteolytic, leading to TP53 stabilization (By similarity). Polyubiquitinated by MUL1 at Lys-24 which leads to proteasomal degradation (By similarity). Deubiquitinated by USP3, leading to stabilization (By similarity). Ubiquitinated by MSL2, promoting its cytoplasmic localization (By similarity). Also ubiquitinated by the SCF(FBXO22)-KDMA4A complex; leading to proteasomal degradation (By similarity).</text>
</comment>
<comment type="PTM">
    <text evidence="3">Acetylation of Lys-382 by CREBBP enhances transcriptional activity. Acetylation of Lys-382 by EP300. Deacetylation of Lys-382 by SIRT1 impairs its ability to induce proapoptotic program and modulate cell senescence. Deacetylation by SIRT2 impairs its ability to induce transcription activation in a AKT-dependent manner. Acetylation at Lys-381 increases stability. Deacetylation at Lys-381 by SIRT6 decreases its stability, thereby regulating cell senescence. Acetylated at Lys-120 by KAT5, KAT6A and KAT8; regulating its ability to induce proapoptotic program.</text>
</comment>
<comment type="PTM">
    <text evidence="3">Lactylation by AARS1 prevents ability to undergo liquid-liquid phase separation (LLPS), thereby inhibiting transcription factor activity.</text>
</comment>
<comment type="disease">
    <text>p53 is found in increased amounts in a wide variety of transformed cells. p53 is frequently mutated or inactivated in many types of cancer.</text>
</comment>
<comment type="similarity">
    <text evidence="7">Belongs to the p53 family.</text>
</comment>
<organism>
    <name type="scientific">Cricetulus griseus</name>
    <name type="common">Chinese hamster</name>
    <name type="synonym">Cricetulus barabensis griseus</name>
    <dbReference type="NCBI Taxonomy" id="10029"/>
    <lineage>
        <taxon>Eukaryota</taxon>
        <taxon>Metazoa</taxon>
        <taxon>Chordata</taxon>
        <taxon>Craniata</taxon>
        <taxon>Vertebrata</taxon>
        <taxon>Euteleostomi</taxon>
        <taxon>Mammalia</taxon>
        <taxon>Eutheria</taxon>
        <taxon>Euarchontoglires</taxon>
        <taxon>Glires</taxon>
        <taxon>Rodentia</taxon>
        <taxon>Myomorpha</taxon>
        <taxon>Muroidea</taxon>
        <taxon>Cricetidae</taxon>
        <taxon>Cricetinae</taxon>
        <taxon>Cricetulus</taxon>
    </lineage>
</organism>
<gene>
    <name type="primary">TP53</name>
    <name type="synonym">P53</name>
</gene>
<protein>
    <recommendedName>
        <fullName>Cellular tumor antigen p53</fullName>
    </recommendedName>
    <alternativeName>
        <fullName>Tumor suppressor p53</fullName>
    </alternativeName>
</protein>